<organism>
    <name type="scientific">Pasteurella multocida (strain Pm70)</name>
    <dbReference type="NCBI Taxonomy" id="272843"/>
    <lineage>
        <taxon>Bacteria</taxon>
        <taxon>Pseudomonadati</taxon>
        <taxon>Pseudomonadota</taxon>
        <taxon>Gammaproteobacteria</taxon>
        <taxon>Pasteurellales</taxon>
        <taxon>Pasteurellaceae</taxon>
        <taxon>Pasteurella</taxon>
    </lineage>
</organism>
<comment type="similarity">
    <text evidence="1">Belongs to the UPF0319 family.</text>
</comment>
<proteinExistence type="inferred from homology"/>
<reference key="1">
    <citation type="journal article" date="2001" name="Proc. Natl. Acad. Sci. U.S.A.">
        <title>Complete genomic sequence of Pasteurella multocida Pm70.</title>
        <authorList>
            <person name="May B.J."/>
            <person name="Zhang Q."/>
            <person name="Li L.L."/>
            <person name="Paustian M.L."/>
            <person name="Whittam T.S."/>
            <person name="Kapur V."/>
        </authorList>
    </citation>
    <scope>NUCLEOTIDE SEQUENCE [LARGE SCALE GENOMIC DNA]</scope>
    <source>
        <strain>Pm70</strain>
    </source>
</reference>
<sequence>MKFRFAALASVALLTSTVSVAGVVTSSSNIDFLAIDGQKPSKSLLKEKRSFNVSDTLPHQVVVRVAEIIRTGSDRSLYESDPIVVTFQGTTDDIIISAPRLETERDANAFKKSPKITVKTVSGVEIATKQEYLKQEGFLPGINLIENLSEYNASGAPAAVARLASTTMPAAIPGFGKAQKGKITVQGENVAEQMLQYWYQQADKETQQRFLSWAKGQK</sequence>
<evidence type="ECO:0000255" key="1">
    <source>
        <dbReference type="HAMAP-Rule" id="MF_00789"/>
    </source>
</evidence>
<feature type="signal peptide" evidence="1">
    <location>
        <begin position="1"/>
        <end position="21"/>
    </location>
</feature>
<feature type="chain" id="PRO_0000036299" description="UPF0319 protein PM0395">
    <location>
        <begin position="22"/>
        <end position="218"/>
    </location>
</feature>
<protein>
    <recommendedName>
        <fullName evidence="1">UPF0319 protein PM0395</fullName>
    </recommendedName>
</protein>
<dbReference type="EMBL" id="AE004439">
    <property type="protein sequence ID" value="AAK02479.1"/>
    <property type="molecule type" value="Genomic_DNA"/>
</dbReference>
<dbReference type="RefSeq" id="WP_005751309.1">
    <property type="nucleotide sequence ID" value="NC_002663.1"/>
</dbReference>
<dbReference type="STRING" id="272843.PM0395"/>
<dbReference type="EnsemblBacteria" id="AAK02479">
    <property type="protein sequence ID" value="AAK02479"/>
    <property type="gene ID" value="PM0395"/>
</dbReference>
<dbReference type="KEGG" id="pmu:PM0395"/>
<dbReference type="PATRIC" id="fig|272843.6.peg.408"/>
<dbReference type="HOGENOM" id="CLU_073782_2_0_6"/>
<dbReference type="OrthoDB" id="6428208at2"/>
<dbReference type="Proteomes" id="UP000000809">
    <property type="component" value="Chromosome"/>
</dbReference>
<dbReference type="HAMAP" id="MF_00789">
    <property type="entry name" value="UPF0319"/>
    <property type="match status" value="1"/>
</dbReference>
<dbReference type="InterPro" id="IPR018635">
    <property type="entry name" value="UPF0319"/>
</dbReference>
<dbReference type="NCBIfam" id="NF002516">
    <property type="entry name" value="PRK01904.1"/>
    <property type="match status" value="1"/>
</dbReference>
<dbReference type="PANTHER" id="PTHR38108">
    <property type="entry name" value="UPF0319 PROTEIN YCCT"/>
    <property type="match status" value="1"/>
</dbReference>
<dbReference type="PANTHER" id="PTHR38108:SF1">
    <property type="entry name" value="UPF0319 PROTEIN YCCT"/>
    <property type="match status" value="1"/>
</dbReference>
<dbReference type="Pfam" id="PF09829">
    <property type="entry name" value="DUF2057"/>
    <property type="match status" value="1"/>
</dbReference>
<name>Y395_PASMU</name>
<gene>
    <name type="ordered locus">PM0395</name>
</gene>
<keyword id="KW-1185">Reference proteome</keyword>
<keyword id="KW-0732">Signal</keyword>
<accession>Q9CNN2</accession>